<reference key="1">
    <citation type="journal article" date="2001" name="Science">
        <title>Comparative genomics of Listeria species.</title>
        <authorList>
            <person name="Glaser P."/>
            <person name="Frangeul L."/>
            <person name="Buchrieser C."/>
            <person name="Rusniok C."/>
            <person name="Amend A."/>
            <person name="Baquero F."/>
            <person name="Berche P."/>
            <person name="Bloecker H."/>
            <person name="Brandt P."/>
            <person name="Chakraborty T."/>
            <person name="Charbit A."/>
            <person name="Chetouani F."/>
            <person name="Couve E."/>
            <person name="de Daruvar A."/>
            <person name="Dehoux P."/>
            <person name="Domann E."/>
            <person name="Dominguez-Bernal G."/>
            <person name="Duchaud E."/>
            <person name="Durant L."/>
            <person name="Dussurget O."/>
            <person name="Entian K.-D."/>
            <person name="Fsihi H."/>
            <person name="Garcia-del Portillo F."/>
            <person name="Garrido P."/>
            <person name="Gautier L."/>
            <person name="Goebel W."/>
            <person name="Gomez-Lopez N."/>
            <person name="Hain T."/>
            <person name="Hauf J."/>
            <person name="Jackson D."/>
            <person name="Jones L.-M."/>
            <person name="Kaerst U."/>
            <person name="Kreft J."/>
            <person name="Kuhn M."/>
            <person name="Kunst F."/>
            <person name="Kurapkat G."/>
            <person name="Madueno E."/>
            <person name="Maitournam A."/>
            <person name="Mata Vicente J."/>
            <person name="Ng E."/>
            <person name="Nedjari H."/>
            <person name="Nordsiek G."/>
            <person name="Novella S."/>
            <person name="de Pablos B."/>
            <person name="Perez-Diaz J.-C."/>
            <person name="Purcell R."/>
            <person name="Remmel B."/>
            <person name="Rose M."/>
            <person name="Schlueter T."/>
            <person name="Simoes N."/>
            <person name="Tierrez A."/>
            <person name="Vazquez-Boland J.-A."/>
            <person name="Voss H."/>
            <person name="Wehland J."/>
            <person name="Cossart P."/>
        </authorList>
    </citation>
    <scope>NUCLEOTIDE SEQUENCE [LARGE SCALE GENOMIC DNA]</scope>
    <source>
        <strain>ATCC BAA-679 / EGD-e</strain>
    </source>
</reference>
<reference key="2">
    <citation type="journal article" date="2004" name="BMC Genomics">
        <title>Retrieving sequences of enzymes experimentally characterized but erroneously annotated: the case of the putrescine carbamoyltransferase.</title>
        <authorList>
            <person name="Naumoff D.G."/>
            <person name="Xu Y."/>
            <person name="Glansdorff N."/>
            <person name="Labedan B."/>
        </authorList>
    </citation>
    <scope>REANNOTATION AS A PTCASE</scope>
</reference>
<reference key="3">
    <citation type="journal article" date="2004" name="Microbiology">
        <title>The difficulty of annotating genes: the case of putrescine carbamoyltransferase.</title>
        <authorList>
            <person name="Naumoff D.G."/>
            <person name="Xu Y."/>
            <person name="Stalon V."/>
            <person name="Glansdorff N."/>
            <person name="Labedan B."/>
        </authorList>
    </citation>
    <scope>GENE NAME</scope>
</reference>
<proteinExistence type="inferred from homology"/>
<dbReference type="EC" id="2.1.3.6" evidence="1"/>
<dbReference type="EMBL" id="AL591973">
    <property type="protein sequence ID" value="CAC98251.1"/>
    <property type="molecule type" value="Genomic_DNA"/>
</dbReference>
<dbReference type="PIR" id="AE1079">
    <property type="entry name" value="AE1079"/>
</dbReference>
<dbReference type="RefSeq" id="NP_463569.1">
    <property type="nucleotide sequence ID" value="NC_003210.1"/>
</dbReference>
<dbReference type="RefSeq" id="WP_003721659.1">
    <property type="nucleotide sequence ID" value="NZ_CP149495.1"/>
</dbReference>
<dbReference type="SMR" id="Q8YAS7"/>
<dbReference type="STRING" id="169963.gene:17592671"/>
<dbReference type="PaxDb" id="169963-lmo0036"/>
<dbReference type="EnsemblBacteria" id="CAC98251">
    <property type="protein sequence ID" value="CAC98251"/>
    <property type="gene ID" value="CAC98251"/>
</dbReference>
<dbReference type="GeneID" id="985152"/>
<dbReference type="KEGG" id="lmo:lmo0036"/>
<dbReference type="PATRIC" id="fig|169963.11.peg.37"/>
<dbReference type="eggNOG" id="COG0078">
    <property type="taxonomic scope" value="Bacteria"/>
</dbReference>
<dbReference type="HOGENOM" id="CLU_043846_3_1_9"/>
<dbReference type="OrthoDB" id="9802587at2"/>
<dbReference type="PhylomeDB" id="Q8YAS7"/>
<dbReference type="BioCyc" id="LMON169963:LMO0036-MONOMER"/>
<dbReference type="UniPathway" id="UPA00534">
    <property type="reaction ID" value="UER00941"/>
</dbReference>
<dbReference type="Proteomes" id="UP000000817">
    <property type="component" value="Chromosome"/>
</dbReference>
<dbReference type="GO" id="GO:0005737">
    <property type="term" value="C:cytoplasm"/>
    <property type="evidence" value="ECO:0007669"/>
    <property type="project" value="UniProtKB-SubCell"/>
</dbReference>
<dbReference type="GO" id="GO:0016597">
    <property type="term" value="F:amino acid binding"/>
    <property type="evidence" value="ECO:0007669"/>
    <property type="project" value="InterPro"/>
</dbReference>
<dbReference type="GO" id="GO:0004585">
    <property type="term" value="F:ornithine carbamoyltransferase activity"/>
    <property type="evidence" value="ECO:0000318"/>
    <property type="project" value="GO_Central"/>
</dbReference>
<dbReference type="GO" id="GO:0050231">
    <property type="term" value="F:putrescine carbamoyltransferase activity"/>
    <property type="evidence" value="ECO:0007669"/>
    <property type="project" value="UniProtKB-UniRule"/>
</dbReference>
<dbReference type="GO" id="GO:0042450">
    <property type="term" value="P:arginine biosynthetic process via ornithine"/>
    <property type="evidence" value="ECO:0000318"/>
    <property type="project" value="GO_Central"/>
</dbReference>
<dbReference type="GO" id="GO:0019240">
    <property type="term" value="P:citrulline biosynthetic process"/>
    <property type="evidence" value="ECO:0000318"/>
    <property type="project" value="GO_Central"/>
</dbReference>
<dbReference type="GO" id="GO:0033390">
    <property type="term" value="P:putrescine biosynthetic process from arginine via N-carbamoylputrescine"/>
    <property type="evidence" value="ECO:0007669"/>
    <property type="project" value="UniProtKB-UniRule"/>
</dbReference>
<dbReference type="FunFam" id="3.40.50.1370:FF:000008">
    <property type="entry name" value="Ornithine carbamoyltransferase"/>
    <property type="match status" value="1"/>
</dbReference>
<dbReference type="Gene3D" id="3.40.50.1370">
    <property type="entry name" value="Aspartate/ornithine carbamoyltransferase"/>
    <property type="match status" value="2"/>
</dbReference>
<dbReference type="HAMAP" id="MF_02102">
    <property type="entry name" value="PTCase"/>
    <property type="match status" value="1"/>
</dbReference>
<dbReference type="InterPro" id="IPR006132">
    <property type="entry name" value="Asp/Orn_carbamoyltranf_P-bd"/>
</dbReference>
<dbReference type="InterPro" id="IPR006130">
    <property type="entry name" value="Asp/Orn_carbamoylTrfase"/>
</dbReference>
<dbReference type="InterPro" id="IPR036901">
    <property type="entry name" value="Asp/Orn_carbamoylTrfase_sf"/>
</dbReference>
<dbReference type="InterPro" id="IPR006131">
    <property type="entry name" value="Asp_carbamoyltransf_Asp/Orn-bd"/>
</dbReference>
<dbReference type="InterPro" id="IPR002292">
    <property type="entry name" value="Orn/put_carbamltrans"/>
</dbReference>
<dbReference type="InterPro" id="IPR024903">
    <property type="entry name" value="PtcA"/>
</dbReference>
<dbReference type="NCBIfam" id="TIGR00658">
    <property type="entry name" value="orni_carb_tr"/>
    <property type="match status" value="1"/>
</dbReference>
<dbReference type="NCBIfam" id="NF001986">
    <property type="entry name" value="PRK00779.1"/>
    <property type="match status" value="1"/>
</dbReference>
<dbReference type="NCBIfam" id="TIGR04384">
    <property type="entry name" value="putr_carbamoyl"/>
    <property type="match status" value="1"/>
</dbReference>
<dbReference type="PANTHER" id="PTHR45753">
    <property type="entry name" value="ORNITHINE CARBAMOYLTRANSFERASE, MITOCHONDRIAL"/>
    <property type="match status" value="1"/>
</dbReference>
<dbReference type="PANTHER" id="PTHR45753:SF3">
    <property type="entry name" value="ORNITHINE TRANSCARBAMYLASE, MITOCHONDRIAL"/>
    <property type="match status" value="1"/>
</dbReference>
<dbReference type="Pfam" id="PF00185">
    <property type="entry name" value="OTCace"/>
    <property type="match status" value="1"/>
</dbReference>
<dbReference type="Pfam" id="PF02729">
    <property type="entry name" value="OTCace_N"/>
    <property type="match status" value="1"/>
</dbReference>
<dbReference type="PRINTS" id="PR00100">
    <property type="entry name" value="AOTCASE"/>
</dbReference>
<dbReference type="PRINTS" id="PR00102">
    <property type="entry name" value="OTCASE"/>
</dbReference>
<dbReference type="SUPFAM" id="SSF53671">
    <property type="entry name" value="Aspartate/ornithine carbamoyltransferase"/>
    <property type="match status" value="1"/>
</dbReference>
<organism>
    <name type="scientific">Listeria monocytogenes serovar 1/2a (strain ATCC BAA-679 / EGD-e)</name>
    <dbReference type="NCBI Taxonomy" id="169963"/>
    <lineage>
        <taxon>Bacteria</taxon>
        <taxon>Bacillati</taxon>
        <taxon>Bacillota</taxon>
        <taxon>Bacilli</taxon>
        <taxon>Bacillales</taxon>
        <taxon>Listeriaceae</taxon>
        <taxon>Listeria</taxon>
    </lineage>
</organism>
<keyword id="KW-0963">Cytoplasm</keyword>
<keyword id="KW-0620">Polyamine biosynthesis</keyword>
<keyword id="KW-1185">Reference proteome</keyword>
<keyword id="KW-0808">Transferase</keyword>
<sequence length="341" mass="38428">MNKKRDFIDTKDFSKEEILFMIEIGRKMKESIKNGHYPQLLKHKTLGMIFEQSSTRTRVSFETAMTQLGGHAQYLAPGQIQLGGHESVGDTAKVLSRLVDILMARVERHQTVVELANTAAIPVINGMSDYNHPTQELGDAITMFEHLPKGKKIEDCKIVFVGDATQVCASTMFMATKLGMDFVQFGPKGFQLREEHLKVAEENCEVSGGSYLITEDVDIALKDADFIYTDVWYGLYEAELSEEERMKTFYPKYQVNKELISKAAPHVKFMHCLPATRGEEVTDEVLDAPYSVVIDEAENRLTAMRALLVYFMNPYVKEAGFAVAEKYDAELELLLRNGAGL</sequence>
<feature type="chain" id="PRO_0000112946" description="Putrescine carbamoyltransferase">
    <location>
        <begin position="1"/>
        <end position="341"/>
    </location>
</feature>
<feature type="binding site" evidence="1">
    <location>
        <begin position="54"/>
        <end position="58"/>
    </location>
    <ligand>
        <name>carbamoyl phosphate</name>
        <dbReference type="ChEBI" id="CHEBI:58228"/>
    </ligand>
</feature>
<feature type="binding site" evidence="1">
    <location>
        <position position="105"/>
    </location>
    <ligand>
        <name>carbamoyl phosphate</name>
        <dbReference type="ChEBI" id="CHEBI:58228"/>
    </ligand>
</feature>
<feature type="binding site" evidence="1">
    <location>
        <position position="132"/>
    </location>
    <ligand>
        <name>carbamoyl phosphate</name>
        <dbReference type="ChEBI" id="CHEBI:58228"/>
    </ligand>
</feature>
<feature type="binding site" evidence="1">
    <location>
        <begin position="271"/>
        <end position="274"/>
    </location>
    <ligand>
        <name>putrescine</name>
        <dbReference type="ChEBI" id="CHEBI:326268"/>
    </ligand>
</feature>
<feature type="site" description="Important for structural integrity" evidence="1">
    <location>
        <position position="29"/>
    </location>
</feature>
<feature type="site" description="Important for structural integrity" evidence="1">
    <location>
        <position position="145"/>
    </location>
</feature>
<accession>Q8YAS7</accession>
<evidence type="ECO:0000255" key="1">
    <source>
        <dbReference type="HAMAP-Rule" id="MF_02102"/>
    </source>
</evidence>
<evidence type="ECO:0000305" key="2"/>
<name>PTC_LISMO</name>
<gene>
    <name evidence="1" type="primary">ptcA</name>
    <name type="ordered locus">lmo0036</name>
</gene>
<protein>
    <recommendedName>
        <fullName evidence="1">Putrescine carbamoyltransferase</fullName>
        <shortName evidence="1">PTC</shortName>
        <shortName evidence="1">PTCase</shortName>
        <ecNumber evidence="1">2.1.3.6</ecNumber>
    </recommendedName>
    <alternativeName>
        <fullName evidence="1">Putrescine transcarbamoylase</fullName>
    </alternativeName>
    <alternativeName>
        <fullName evidence="1">Putrescine transcarbamylase</fullName>
    </alternativeName>
</protein>
<comment type="function">
    <text evidence="1">Catalyzes the phosphorolysis of N-carbamoylputrescine to form carbamoyl phosphate and putrescine. Is involved in the degradation pathway of the polyamine agmatine.</text>
</comment>
<comment type="catalytic activity">
    <reaction evidence="1">
        <text>carbamoyl phosphate + putrescine = N-carbamoylputrescine + phosphate + H(+)</text>
        <dbReference type="Rhea" id="RHEA:21936"/>
        <dbReference type="ChEBI" id="CHEBI:15378"/>
        <dbReference type="ChEBI" id="CHEBI:43474"/>
        <dbReference type="ChEBI" id="CHEBI:58228"/>
        <dbReference type="ChEBI" id="CHEBI:58318"/>
        <dbReference type="ChEBI" id="CHEBI:326268"/>
        <dbReference type="EC" id="2.1.3.6"/>
    </reaction>
</comment>
<comment type="pathway">
    <text evidence="1">Amine and polyamine biosynthesis; putrescine biosynthesis via agmatine pathway; putrescine from N-carbamoylputrescine (transferase route): step 1/1.</text>
</comment>
<comment type="subunit">
    <text evidence="1">Homotrimer.</text>
</comment>
<comment type="subcellular location">
    <subcellularLocation>
        <location evidence="2">Cytoplasm</location>
    </subcellularLocation>
</comment>
<comment type="similarity">
    <text evidence="1">Belongs to the aspartate/ornithine carbamoyltransferase superfamily. PTCase family.</text>
</comment>